<protein>
    <recommendedName>
        <fullName evidence="1">Bifunctional uridylyltransferase/uridylyl-removing enzyme</fullName>
        <shortName evidence="1">UTase/UR</shortName>
    </recommendedName>
    <alternativeName>
        <fullName evidence="1">Bifunctional [protein-PII] modification enzyme</fullName>
    </alternativeName>
    <alternativeName>
        <fullName evidence="1">Bifunctional nitrogen sensor protein</fullName>
    </alternativeName>
    <domain>
        <recommendedName>
            <fullName evidence="1">[Protein-PII] uridylyltransferase</fullName>
            <shortName evidence="1">PII uridylyltransferase</shortName>
            <shortName evidence="1">UTase</shortName>
            <ecNumber evidence="1">2.7.7.59</ecNumber>
        </recommendedName>
    </domain>
    <domain>
        <recommendedName>
            <fullName evidence="1">[Protein-PII]-UMP uridylyl-removing enzyme</fullName>
            <shortName evidence="1">UR</shortName>
            <ecNumber evidence="1">3.1.4.-</ecNumber>
        </recommendedName>
    </domain>
</protein>
<dbReference type="EC" id="2.7.7.59" evidence="1"/>
<dbReference type="EC" id="3.1.4.-" evidence="1"/>
<dbReference type="EMBL" id="CU928163">
    <property type="protein sequence ID" value="CAR11384.1"/>
    <property type="molecule type" value="Genomic_DNA"/>
</dbReference>
<dbReference type="RefSeq" id="WP_001094548.1">
    <property type="nucleotide sequence ID" value="NC_011751.1"/>
</dbReference>
<dbReference type="RefSeq" id="YP_002410940.1">
    <property type="nucleotide sequence ID" value="NC_011751.1"/>
</dbReference>
<dbReference type="SMR" id="B7N834"/>
<dbReference type="STRING" id="585056.ECUMN_0163"/>
<dbReference type="KEGG" id="eum:ECUMN_0163"/>
<dbReference type="PATRIC" id="fig|585056.7.peg.356"/>
<dbReference type="HOGENOM" id="CLU_012833_0_0_6"/>
<dbReference type="Proteomes" id="UP000007097">
    <property type="component" value="Chromosome"/>
</dbReference>
<dbReference type="GO" id="GO:0008773">
    <property type="term" value="F:[protein-PII] uridylyltransferase activity"/>
    <property type="evidence" value="ECO:0007669"/>
    <property type="project" value="UniProtKB-UniRule"/>
</dbReference>
<dbReference type="GO" id="GO:0008081">
    <property type="term" value="F:phosphoric diester hydrolase activity"/>
    <property type="evidence" value="ECO:0007669"/>
    <property type="project" value="UniProtKB-UniRule"/>
</dbReference>
<dbReference type="GO" id="GO:0006808">
    <property type="term" value="P:regulation of nitrogen utilization"/>
    <property type="evidence" value="ECO:0007669"/>
    <property type="project" value="UniProtKB-UniRule"/>
</dbReference>
<dbReference type="CDD" id="cd04899">
    <property type="entry name" value="ACT_ACR-UUR-like_2"/>
    <property type="match status" value="1"/>
</dbReference>
<dbReference type="CDD" id="cd04900">
    <property type="entry name" value="ACT_UUR-like_1"/>
    <property type="match status" value="1"/>
</dbReference>
<dbReference type="CDD" id="cd00077">
    <property type="entry name" value="HDc"/>
    <property type="match status" value="1"/>
</dbReference>
<dbReference type="CDD" id="cd05401">
    <property type="entry name" value="NT_GlnE_GlnD_like"/>
    <property type="match status" value="1"/>
</dbReference>
<dbReference type="FunFam" id="1.10.3210.10:FF:000005">
    <property type="entry name" value="Bifunctional uridylyltransferase/uridylyl-removing enzyme"/>
    <property type="match status" value="1"/>
</dbReference>
<dbReference type="Gene3D" id="1.10.3210.10">
    <property type="entry name" value="Hypothetical protein af1432"/>
    <property type="match status" value="1"/>
</dbReference>
<dbReference type="HAMAP" id="MF_00277">
    <property type="entry name" value="PII_uridylyl_transf"/>
    <property type="match status" value="1"/>
</dbReference>
<dbReference type="InterPro" id="IPR045865">
    <property type="entry name" value="ACT-like_dom_sf"/>
</dbReference>
<dbReference type="InterPro" id="IPR002912">
    <property type="entry name" value="ACT_dom"/>
</dbReference>
<dbReference type="InterPro" id="IPR003607">
    <property type="entry name" value="HD/PDEase_dom"/>
</dbReference>
<dbReference type="InterPro" id="IPR006674">
    <property type="entry name" value="HD_domain"/>
</dbReference>
<dbReference type="InterPro" id="IPR043519">
    <property type="entry name" value="NT_sf"/>
</dbReference>
<dbReference type="InterPro" id="IPR013546">
    <property type="entry name" value="PII_UdlTrfase/GS_AdlTrfase"/>
</dbReference>
<dbReference type="InterPro" id="IPR002934">
    <property type="entry name" value="Polymerase_NTP_transf_dom"/>
</dbReference>
<dbReference type="InterPro" id="IPR010043">
    <property type="entry name" value="UTase/UR"/>
</dbReference>
<dbReference type="NCBIfam" id="NF002487">
    <property type="entry name" value="PRK01759.1"/>
    <property type="match status" value="1"/>
</dbReference>
<dbReference type="NCBIfam" id="NF003448">
    <property type="entry name" value="PRK05007.1"/>
    <property type="match status" value="1"/>
</dbReference>
<dbReference type="NCBIfam" id="TIGR01693">
    <property type="entry name" value="UTase_glnD"/>
    <property type="match status" value="1"/>
</dbReference>
<dbReference type="PANTHER" id="PTHR47320">
    <property type="entry name" value="BIFUNCTIONAL URIDYLYLTRANSFERASE/URIDYLYL-REMOVING ENZYME"/>
    <property type="match status" value="1"/>
</dbReference>
<dbReference type="PANTHER" id="PTHR47320:SF1">
    <property type="entry name" value="BIFUNCTIONAL URIDYLYLTRANSFERASE_URIDYLYL-REMOVING ENZYME"/>
    <property type="match status" value="1"/>
</dbReference>
<dbReference type="Pfam" id="PF01842">
    <property type="entry name" value="ACT"/>
    <property type="match status" value="2"/>
</dbReference>
<dbReference type="Pfam" id="PF08335">
    <property type="entry name" value="GlnD_UR_UTase"/>
    <property type="match status" value="1"/>
</dbReference>
<dbReference type="Pfam" id="PF01966">
    <property type="entry name" value="HD"/>
    <property type="match status" value="1"/>
</dbReference>
<dbReference type="Pfam" id="PF01909">
    <property type="entry name" value="NTP_transf_2"/>
    <property type="match status" value="1"/>
</dbReference>
<dbReference type="PIRSF" id="PIRSF006288">
    <property type="entry name" value="PII_uridyltransf"/>
    <property type="match status" value="1"/>
</dbReference>
<dbReference type="SMART" id="SM00471">
    <property type="entry name" value="HDc"/>
    <property type="match status" value="1"/>
</dbReference>
<dbReference type="SUPFAM" id="SSF55021">
    <property type="entry name" value="ACT-like"/>
    <property type="match status" value="2"/>
</dbReference>
<dbReference type="SUPFAM" id="SSF109604">
    <property type="entry name" value="HD-domain/PDEase-like"/>
    <property type="match status" value="1"/>
</dbReference>
<dbReference type="SUPFAM" id="SSF81301">
    <property type="entry name" value="Nucleotidyltransferase"/>
    <property type="match status" value="1"/>
</dbReference>
<dbReference type="SUPFAM" id="SSF81593">
    <property type="entry name" value="Nucleotidyltransferase substrate binding subunit/domain"/>
    <property type="match status" value="1"/>
</dbReference>
<dbReference type="PROSITE" id="PS51671">
    <property type="entry name" value="ACT"/>
    <property type="match status" value="2"/>
</dbReference>
<dbReference type="PROSITE" id="PS51831">
    <property type="entry name" value="HD"/>
    <property type="match status" value="1"/>
</dbReference>
<gene>
    <name evidence="1" type="primary">glnD</name>
    <name type="ordered locus">ECUMN_0163</name>
</gene>
<comment type="function">
    <text evidence="1">Modifies, by uridylylation and deuridylylation, the PII regulatory proteins (GlnB and homologs), in response to the nitrogen status of the cell that GlnD senses through the glutamine level. Under low glutamine levels, catalyzes the conversion of the PII proteins and UTP to PII-UMP and PPi, while under higher glutamine levels, GlnD hydrolyzes PII-UMP to PII and UMP (deuridylylation). Thus, controls uridylylation state and activity of the PII proteins, and plays an important role in the regulation of nitrogen assimilation and metabolism.</text>
</comment>
<comment type="catalytic activity">
    <reaction evidence="1">
        <text>[protein-PII]-L-tyrosine + UTP = [protein-PII]-uridylyl-L-tyrosine + diphosphate</text>
        <dbReference type="Rhea" id="RHEA:13673"/>
        <dbReference type="Rhea" id="RHEA-COMP:12147"/>
        <dbReference type="Rhea" id="RHEA-COMP:12148"/>
        <dbReference type="ChEBI" id="CHEBI:33019"/>
        <dbReference type="ChEBI" id="CHEBI:46398"/>
        <dbReference type="ChEBI" id="CHEBI:46858"/>
        <dbReference type="ChEBI" id="CHEBI:90602"/>
        <dbReference type="EC" id="2.7.7.59"/>
    </reaction>
</comment>
<comment type="catalytic activity">
    <reaction evidence="1">
        <text>[protein-PII]-uridylyl-L-tyrosine + H2O = [protein-PII]-L-tyrosine + UMP + H(+)</text>
        <dbReference type="Rhea" id="RHEA:48600"/>
        <dbReference type="Rhea" id="RHEA-COMP:12147"/>
        <dbReference type="Rhea" id="RHEA-COMP:12148"/>
        <dbReference type="ChEBI" id="CHEBI:15377"/>
        <dbReference type="ChEBI" id="CHEBI:15378"/>
        <dbReference type="ChEBI" id="CHEBI:46858"/>
        <dbReference type="ChEBI" id="CHEBI:57865"/>
        <dbReference type="ChEBI" id="CHEBI:90602"/>
    </reaction>
</comment>
<comment type="cofactor">
    <cofactor evidence="1">
        <name>Mg(2+)</name>
        <dbReference type="ChEBI" id="CHEBI:18420"/>
    </cofactor>
</comment>
<comment type="activity regulation">
    <text evidence="1">Uridylyltransferase (UTase) activity is inhibited by glutamine, while glutamine activates uridylyl-removing (UR) activity.</text>
</comment>
<comment type="domain">
    <text evidence="1">Has four distinct domains: an N-terminal nucleotidyltransferase (NT) domain responsible for UTase activity, a central HD domain that encodes UR activity, and two C-terminal ACT domains that seem to have a role in glutamine sensing.</text>
</comment>
<comment type="similarity">
    <text evidence="1">Belongs to the GlnD family.</text>
</comment>
<name>GLND_ECOLU</name>
<organism>
    <name type="scientific">Escherichia coli O17:K52:H18 (strain UMN026 / ExPEC)</name>
    <dbReference type="NCBI Taxonomy" id="585056"/>
    <lineage>
        <taxon>Bacteria</taxon>
        <taxon>Pseudomonadati</taxon>
        <taxon>Pseudomonadota</taxon>
        <taxon>Gammaproteobacteria</taxon>
        <taxon>Enterobacterales</taxon>
        <taxon>Enterobacteriaceae</taxon>
        <taxon>Escherichia</taxon>
    </lineage>
</organism>
<proteinExistence type="inferred from homology"/>
<reference key="1">
    <citation type="journal article" date="2009" name="PLoS Genet.">
        <title>Organised genome dynamics in the Escherichia coli species results in highly diverse adaptive paths.</title>
        <authorList>
            <person name="Touchon M."/>
            <person name="Hoede C."/>
            <person name="Tenaillon O."/>
            <person name="Barbe V."/>
            <person name="Baeriswyl S."/>
            <person name="Bidet P."/>
            <person name="Bingen E."/>
            <person name="Bonacorsi S."/>
            <person name="Bouchier C."/>
            <person name="Bouvet O."/>
            <person name="Calteau A."/>
            <person name="Chiapello H."/>
            <person name="Clermont O."/>
            <person name="Cruveiller S."/>
            <person name="Danchin A."/>
            <person name="Diard M."/>
            <person name="Dossat C."/>
            <person name="Karoui M.E."/>
            <person name="Frapy E."/>
            <person name="Garry L."/>
            <person name="Ghigo J.M."/>
            <person name="Gilles A.M."/>
            <person name="Johnson J."/>
            <person name="Le Bouguenec C."/>
            <person name="Lescat M."/>
            <person name="Mangenot S."/>
            <person name="Martinez-Jehanne V."/>
            <person name="Matic I."/>
            <person name="Nassif X."/>
            <person name="Oztas S."/>
            <person name="Petit M.A."/>
            <person name="Pichon C."/>
            <person name="Rouy Z."/>
            <person name="Ruf C.S."/>
            <person name="Schneider D."/>
            <person name="Tourret J."/>
            <person name="Vacherie B."/>
            <person name="Vallenet D."/>
            <person name="Medigue C."/>
            <person name="Rocha E.P.C."/>
            <person name="Denamur E."/>
        </authorList>
    </citation>
    <scope>NUCLEOTIDE SEQUENCE [LARGE SCALE GENOMIC DNA]</scope>
    <source>
        <strain>UMN026 / ExPEC</strain>
    </source>
</reference>
<keyword id="KW-0378">Hydrolase</keyword>
<keyword id="KW-0460">Magnesium</keyword>
<keyword id="KW-0511">Multifunctional enzyme</keyword>
<keyword id="KW-0548">Nucleotidyltransferase</keyword>
<keyword id="KW-0677">Repeat</keyword>
<keyword id="KW-0808">Transferase</keyword>
<accession>B7N834</accession>
<feature type="chain" id="PRO_1000119365" description="Bifunctional uridylyltransferase/uridylyl-removing enzyme">
    <location>
        <begin position="1"/>
        <end position="890"/>
    </location>
</feature>
<feature type="domain" description="HD" evidence="2">
    <location>
        <begin position="468"/>
        <end position="590"/>
    </location>
</feature>
<feature type="domain" description="ACT 1" evidence="1">
    <location>
        <begin position="709"/>
        <end position="789"/>
    </location>
</feature>
<feature type="domain" description="ACT 2" evidence="1">
    <location>
        <begin position="816"/>
        <end position="890"/>
    </location>
</feature>
<feature type="region of interest" description="Uridylyltransferase">
    <location>
        <begin position="1"/>
        <end position="349"/>
    </location>
</feature>
<feature type="region of interest" description="Uridylyl-removing">
    <location>
        <begin position="350"/>
        <end position="708"/>
    </location>
</feature>
<evidence type="ECO:0000255" key="1">
    <source>
        <dbReference type="HAMAP-Rule" id="MF_00277"/>
    </source>
</evidence>
<evidence type="ECO:0000255" key="2">
    <source>
        <dbReference type="PROSITE-ProRule" id="PRU01175"/>
    </source>
</evidence>
<sequence>MNTLPEQYANTALPTLPGQPQNPCAWPRDELTVCGIKAHIDTFQRWLGDAFDNGISAEQLIEARTEFIDQLLQRLWIEAGFSQIADLALVAVGGYGRGELHPLSDIDLLILSRKKLPDDQAQKVGELLTLLWDVKLEVGHSVRTLEECMLEGLSDLTVATNLIESRLLIGDVALFLELQKHIFSEGFWPSDKFYAAKVEEQNQRHQRYHGTSYNLEPDIKSSPGGLRDIHTLQWVARRHFGATSLDEMVGFGFLTSAERAELNECLHILWRIRFALHLVVSRYDNRLLFDRQLSVAQRLNYSGEGNEPVERMMKDYFRVTRRVSELNQMLLQLFDEAILALPADEKPRPIDDEFQLRGTLIDLRDETLFMRQPEAILRMFYTMVRNSAITGIYSTTLRQLRHARRHLQQPLCNIPEARKLFLSILRHPGAVRRGLLPMHRHSVLGAYMPQWSHIVGQMQFDLFHAYTVDEHTIRVMLKLESFASEETRQRHPLCVDVWPRLPSTELIFIAALFHDIAKGRGGDHSILGAQDVVHFAELHGLNSRETQLVAWLVRQHLLMSVTAQRRDIQDPEVIKQFAEEVQTENRLRYLVCLTVADICATNETLWNSWKQSLLRELYFATEKQLRRGMQNTPDMRERVRHHQLQALALLRMDNIDEEALHQIWSRCRANYFVRHSPNQLAWHARHLLQHDLSKPLVLLSPQATRGGTEIFIWSPDRPYLFAAVCAELDRRNLSVHDAQIFTTRDGMAMDTFIVLEPDGSPLSADRHEVIRFGLEQVLTQSSWQPPQPRRQPAKLRHFTVETEVTFLPTHTDRKSFLELIALDQPGLLARVGKIFADLGISLHGARITTIGERVEDLFIIATADRRALNNELQQEVHQRLTEALNPNDKG</sequence>